<accession>Q9LSP8</accession>
<accession>F4J3Y2</accession>
<accession>Q56WD5</accession>
<evidence type="ECO:0000250" key="1">
    <source>
        <dbReference type="UniProtKB" id="Q8GSA7"/>
    </source>
</evidence>
<evidence type="ECO:0000255" key="2"/>
<evidence type="ECO:0000255" key="3">
    <source>
        <dbReference type="PROSITE-ProRule" id="PRU00116"/>
    </source>
</evidence>
<evidence type="ECO:0000255" key="4">
    <source>
        <dbReference type="PROSITE-ProRule" id="PRU00767"/>
    </source>
</evidence>
<evidence type="ECO:0000269" key="5">
    <source>
    </source>
</evidence>
<evidence type="ECO:0000269" key="6">
    <source>
    </source>
</evidence>
<evidence type="ECO:0000303" key="7">
    <source>
    </source>
</evidence>
<evidence type="ECO:0000303" key="8">
    <source>
    </source>
</evidence>
<evidence type="ECO:0000303" key="9">
    <source>
    </source>
</evidence>
<evidence type="ECO:0000303" key="10">
    <source ref="4"/>
</evidence>
<evidence type="ECO:0000305" key="11"/>
<evidence type="ECO:0000305" key="12">
    <source>
    </source>
</evidence>
<evidence type="ECO:0000312" key="13">
    <source>
        <dbReference type="Araport" id="AT3G16940"/>
    </source>
</evidence>
<evidence type="ECO:0000312" key="14">
    <source>
        <dbReference type="EMBL" id="AAR98748.1"/>
    </source>
</evidence>
<evidence type="ECO:0000312" key="15">
    <source>
        <dbReference type="EMBL" id="BAA94977.1"/>
    </source>
</evidence>
<name>CMTA6_ARATH</name>
<keyword id="KW-0010">Activator</keyword>
<keyword id="KW-0025">Alternative splicing</keyword>
<keyword id="KW-0040">ANK repeat</keyword>
<keyword id="KW-0106">Calcium</keyword>
<keyword id="KW-0112">Calmodulin-binding</keyword>
<keyword id="KW-0175">Coiled coil</keyword>
<keyword id="KW-0238">DNA-binding</keyword>
<keyword id="KW-0539">Nucleus</keyword>
<keyword id="KW-1185">Reference proteome</keyword>
<keyword id="KW-0677">Repeat</keyword>
<keyword id="KW-0346">Stress response</keyword>
<keyword id="KW-0804">Transcription</keyword>
<proteinExistence type="evidence at protein level"/>
<comment type="function">
    <text evidence="1 5 12">Transcription activator that binds calmodulin in a calcium-dependent manner in vitro (PubMed:12218065). Binds to the DNA consensus sequence 5'-[ACG]CGCG[GTC]-3' (By similarity). Regulates transcriptional activity in response to calcium signals (Probable).</text>
</comment>
<comment type="subcellular location">
    <subcellularLocation>
        <location evidence="4">Nucleus</location>
    </subcellularLocation>
</comment>
<comment type="alternative products">
    <event type="alternative splicing"/>
    <isoform>
        <id>Q9LSP8-1</id>
        <name>1</name>
        <sequence type="displayed"/>
    </isoform>
    <isoform>
        <id>Q9LSP8-2</id>
        <name>2</name>
        <sequence type="described" ref="VSP_017016"/>
    </isoform>
    <isoform>
        <id>Q9LSP8-3</id>
        <name>3</name>
        <sequence type="described" ref="VSP_042264 VSP_017016"/>
    </isoform>
</comment>
<comment type="tissue specificity">
    <text evidence="5 6">Expressed in roots, stems, leaves, sepals, petals, stamen filaments, top of carpels, anthers and siliques, but not in stigmas.</text>
</comment>
<comment type="induction">
    <text evidence="5">By heat shock, UVB, salt, wounding, abscisic acid, H(2)O(2) and salicylic acid.</text>
</comment>
<comment type="miscellaneous">
    <molecule>Isoform 2</molecule>
    <text evidence="11">Incomplete sequence.</text>
</comment>
<comment type="similarity">
    <text evidence="11">Belongs to the CAMTA family.</text>
</comment>
<comment type="sequence caution" evidence="11">
    <conflict type="erroneous initiation">
        <sequence resource="EMBL-CDS" id="BAD95048"/>
    </conflict>
    <text>Truncated N-terminus.</text>
</comment>
<dbReference type="EMBL" id="AY510027">
    <property type="protein sequence ID" value="AAR98748.1"/>
    <property type="molecule type" value="mRNA"/>
</dbReference>
<dbReference type="EMBL" id="AB026636">
    <property type="protein sequence ID" value="BAA94977.1"/>
    <property type="molecule type" value="Genomic_DNA"/>
</dbReference>
<dbReference type="EMBL" id="CP002686">
    <property type="protein sequence ID" value="AEE75886.1"/>
    <property type="molecule type" value="Genomic_DNA"/>
</dbReference>
<dbReference type="EMBL" id="AK222107">
    <property type="protein sequence ID" value="BAD95048.1"/>
    <property type="status" value="ALT_INIT"/>
    <property type="molecule type" value="mRNA"/>
</dbReference>
<dbReference type="RefSeq" id="NP_188319.2">
    <molecule id="Q9LSP8-3"/>
    <property type="nucleotide sequence ID" value="NM_112570.4"/>
</dbReference>
<dbReference type="SMR" id="Q9LSP8"/>
<dbReference type="FunCoup" id="Q9LSP8">
    <property type="interactions" value="1790"/>
</dbReference>
<dbReference type="STRING" id="3702.Q9LSP8"/>
<dbReference type="iPTMnet" id="Q9LSP8"/>
<dbReference type="PaxDb" id="3702-AT3G16940.1"/>
<dbReference type="PeptideAtlas" id="Q9LSP8"/>
<dbReference type="EnsemblPlants" id="AT3G16940.1">
    <molecule id="Q9LSP8-3"/>
    <property type="protein sequence ID" value="AT3G16940.1"/>
    <property type="gene ID" value="AT3G16940"/>
</dbReference>
<dbReference type="GeneID" id="820950"/>
<dbReference type="Gramene" id="AT3G16940.1">
    <molecule id="Q9LSP8-3"/>
    <property type="protein sequence ID" value="AT3G16940.1"/>
    <property type="gene ID" value="AT3G16940"/>
</dbReference>
<dbReference type="KEGG" id="ath:AT3G16940"/>
<dbReference type="Araport" id="AT3G16940"/>
<dbReference type="TAIR" id="AT3G16940">
    <property type="gene designation" value="CAMTA6"/>
</dbReference>
<dbReference type="eggNOG" id="KOG0520">
    <property type="taxonomic scope" value="Eukaryota"/>
</dbReference>
<dbReference type="HOGENOM" id="CLU_005708_1_0_1"/>
<dbReference type="InParanoid" id="Q9LSP8"/>
<dbReference type="OrthoDB" id="407555at2759"/>
<dbReference type="PhylomeDB" id="Q9LSP8"/>
<dbReference type="PRO" id="PR:Q9LSP8"/>
<dbReference type="Proteomes" id="UP000006548">
    <property type="component" value="Chromosome 3"/>
</dbReference>
<dbReference type="ExpressionAtlas" id="Q9LSP8">
    <property type="expression patterns" value="baseline and differential"/>
</dbReference>
<dbReference type="GO" id="GO:0005634">
    <property type="term" value="C:nucleus"/>
    <property type="evidence" value="ECO:0007669"/>
    <property type="project" value="UniProtKB-SubCell"/>
</dbReference>
<dbReference type="GO" id="GO:0005516">
    <property type="term" value="F:calmodulin binding"/>
    <property type="evidence" value="ECO:0000314"/>
    <property type="project" value="UniProtKB"/>
</dbReference>
<dbReference type="GO" id="GO:0003677">
    <property type="term" value="F:DNA binding"/>
    <property type="evidence" value="ECO:0007669"/>
    <property type="project" value="UniProtKB-KW"/>
</dbReference>
<dbReference type="GO" id="GO:0006355">
    <property type="term" value="P:regulation of DNA-templated transcription"/>
    <property type="evidence" value="ECO:0000304"/>
    <property type="project" value="TAIR"/>
</dbReference>
<dbReference type="GO" id="GO:0009651">
    <property type="term" value="P:response to salt stress"/>
    <property type="evidence" value="ECO:0000315"/>
    <property type="project" value="TAIR"/>
</dbReference>
<dbReference type="CDD" id="cd23767">
    <property type="entry name" value="IQCD"/>
    <property type="match status" value="1"/>
</dbReference>
<dbReference type="FunFam" id="2.60.40.10:FF:001656">
    <property type="entry name" value="Calmodulin-binding transcription activator 5"/>
    <property type="match status" value="1"/>
</dbReference>
<dbReference type="FunFam" id="1.25.40.20:FF:000150">
    <property type="entry name" value="calmodulin-binding transcription activator 5"/>
    <property type="match status" value="1"/>
</dbReference>
<dbReference type="Gene3D" id="1.20.5.190">
    <property type="match status" value="1"/>
</dbReference>
<dbReference type="Gene3D" id="1.25.40.20">
    <property type="entry name" value="Ankyrin repeat-containing domain"/>
    <property type="match status" value="1"/>
</dbReference>
<dbReference type="Gene3D" id="2.60.40.10">
    <property type="entry name" value="Immunoglobulins"/>
    <property type="match status" value="1"/>
</dbReference>
<dbReference type="InterPro" id="IPR002110">
    <property type="entry name" value="Ankyrin_rpt"/>
</dbReference>
<dbReference type="InterPro" id="IPR036770">
    <property type="entry name" value="Ankyrin_rpt-contain_sf"/>
</dbReference>
<dbReference type="InterPro" id="IPR005559">
    <property type="entry name" value="CG-1_dom"/>
</dbReference>
<dbReference type="InterPro" id="IPR013783">
    <property type="entry name" value="Ig-like_fold"/>
</dbReference>
<dbReference type="InterPro" id="IPR014756">
    <property type="entry name" value="Ig_E-set"/>
</dbReference>
<dbReference type="InterPro" id="IPR002909">
    <property type="entry name" value="IPT_dom"/>
</dbReference>
<dbReference type="InterPro" id="IPR000048">
    <property type="entry name" value="IQ_motif_EF-hand-BS"/>
</dbReference>
<dbReference type="PANTHER" id="PTHR23335:SF44">
    <property type="entry name" value="CALMODULIN-BINDING TRANSCRIPTION ACTIVATOR 6"/>
    <property type="match status" value="1"/>
</dbReference>
<dbReference type="PANTHER" id="PTHR23335">
    <property type="entry name" value="CALMODULIN-BINDING TRANSCRIPTION ACTIVATOR CAMTA"/>
    <property type="match status" value="1"/>
</dbReference>
<dbReference type="Pfam" id="PF12796">
    <property type="entry name" value="Ank_2"/>
    <property type="match status" value="1"/>
</dbReference>
<dbReference type="Pfam" id="PF03859">
    <property type="entry name" value="CG-1"/>
    <property type="match status" value="1"/>
</dbReference>
<dbReference type="Pfam" id="PF00612">
    <property type="entry name" value="IQ"/>
    <property type="match status" value="2"/>
</dbReference>
<dbReference type="Pfam" id="PF01833">
    <property type="entry name" value="TIG"/>
    <property type="match status" value="1"/>
</dbReference>
<dbReference type="SMART" id="SM00248">
    <property type="entry name" value="ANK"/>
    <property type="match status" value="1"/>
</dbReference>
<dbReference type="SMART" id="SM01076">
    <property type="entry name" value="CG-1"/>
    <property type="match status" value="1"/>
</dbReference>
<dbReference type="SMART" id="SM00015">
    <property type="entry name" value="IQ"/>
    <property type="match status" value="3"/>
</dbReference>
<dbReference type="SUPFAM" id="SSF48403">
    <property type="entry name" value="Ankyrin repeat"/>
    <property type="match status" value="1"/>
</dbReference>
<dbReference type="SUPFAM" id="SSF81296">
    <property type="entry name" value="E set domains"/>
    <property type="match status" value="1"/>
</dbReference>
<dbReference type="PROSITE" id="PS50297">
    <property type="entry name" value="ANK_REP_REGION"/>
    <property type="match status" value="1"/>
</dbReference>
<dbReference type="PROSITE" id="PS50088">
    <property type="entry name" value="ANK_REPEAT"/>
    <property type="match status" value="1"/>
</dbReference>
<dbReference type="PROSITE" id="PS51437">
    <property type="entry name" value="CG_1"/>
    <property type="match status" value="1"/>
</dbReference>
<dbReference type="PROSITE" id="PS50096">
    <property type="entry name" value="IQ"/>
    <property type="match status" value="3"/>
</dbReference>
<gene>
    <name evidence="8" type="primary">CAMTA6</name>
    <name evidence="11" type="synonym">CMTA6</name>
    <name evidence="9" type="synonym">SR3</name>
    <name evidence="13" type="ordered locus">At3g16940</name>
    <name evidence="15" type="ORF">K14A17.5</name>
    <name type="ORF">K14A17_6</name>
</gene>
<reference key="1">
    <citation type="submission" date="2003-12" db="EMBL/GenBank/DDBJ databases">
        <title>A calmodulin-binding protein from Arabidopsis.</title>
        <authorList>
            <person name="Reddy V.S."/>
            <person name="Reddy A.S.N."/>
        </authorList>
    </citation>
    <scope>NUCLEOTIDE SEQUENCE [MRNA] (ISOFORM 1)</scope>
</reference>
<reference key="2">
    <citation type="journal article" date="2000" name="DNA Res.">
        <title>Structural analysis of Arabidopsis thaliana chromosome 3. I. Sequence features of the regions of 4,504,864 bp covered by sixty P1 and TAC clones.</title>
        <authorList>
            <person name="Sato S."/>
            <person name="Nakamura Y."/>
            <person name="Kaneko T."/>
            <person name="Katoh T."/>
            <person name="Asamizu E."/>
            <person name="Tabata S."/>
        </authorList>
    </citation>
    <scope>NUCLEOTIDE SEQUENCE [LARGE SCALE GENOMIC DNA]</scope>
    <source>
        <strain>cv. Columbia</strain>
    </source>
</reference>
<reference key="3">
    <citation type="journal article" date="2017" name="Plant J.">
        <title>Araport11: a complete reannotation of the Arabidopsis thaliana reference genome.</title>
        <authorList>
            <person name="Cheng C.Y."/>
            <person name="Krishnakumar V."/>
            <person name="Chan A.P."/>
            <person name="Thibaud-Nissen F."/>
            <person name="Schobel S."/>
            <person name="Town C.D."/>
        </authorList>
    </citation>
    <scope>GENOME REANNOTATION</scope>
    <source>
        <strain>cv. Columbia</strain>
    </source>
</reference>
<reference key="4">
    <citation type="submission" date="2005-03" db="EMBL/GenBank/DDBJ databases">
        <title>Large-scale analysis of RIKEN Arabidopsis full-length (RAFL) cDNAs.</title>
        <authorList>
            <person name="Totoki Y."/>
            <person name="Seki M."/>
            <person name="Ishida J."/>
            <person name="Nakajima M."/>
            <person name="Enju A."/>
            <person name="Kamiya A."/>
            <person name="Narusaka M."/>
            <person name="Shin-i T."/>
            <person name="Nakagawa M."/>
            <person name="Sakamoto N."/>
            <person name="Oishi K."/>
            <person name="Kohara Y."/>
            <person name="Kobayashi M."/>
            <person name="Toyoda A."/>
            <person name="Sakaki Y."/>
            <person name="Sakurai T."/>
            <person name="Iida K."/>
            <person name="Akiyama K."/>
            <person name="Satou M."/>
            <person name="Toyoda T."/>
            <person name="Konagaya A."/>
            <person name="Carninci P."/>
            <person name="Kawai J."/>
            <person name="Hayashizaki Y."/>
            <person name="Shinozaki K."/>
        </authorList>
    </citation>
    <scope>NUCLEOTIDE SEQUENCE [LARGE SCALE MRNA] OF 625-838 (ISOFORM 2)</scope>
    <source>
        <strain>cv. Columbia</strain>
    </source>
</reference>
<reference key="5">
    <citation type="journal article" date="2002" name="J. Biol. Chem.">
        <title>A novel family of calmodulin-binding transcription activators in multicellular organisms.</title>
        <authorList>
            <person name="Bouche N."/>
            <person name="Scharlat A."/>
            <person name="Snedden W."/>
            <person name="Bouchez D."/>
            <person name="Fromm H."/>
        </authorList>
    </citation>
    <scope>FUNCTION</scope>
    <scope>GENE FAMILY</scope>
    <scope>NOMENCLATURE</scope>
</reference>
<reference key="6">
    <citation type="journal article" date="2002" name="J. Biol. Chem.">
        <title>A calmodulin-binding/CGCG box DNA-binding protein family involved in multiple signaling pathways in plants.</title>
        <authorList>
            <person name="Yang T."/>
            <person name="Poovaiah B.W."/>
        </authorList>
    </citation>
    <scope>FUNCTION</scope>
    <scope>CALMODULIN-BINDING</scope>
    <scope>INDUCTION</scope>
    <scope>TISSUE SPECIFICITY</scope>
</reference>
<reference key="7">
    <citation type="journal article" date="2003" name="Plant Cell Physiol.">
        <title>Arabidopsis CAMTA family proteins enhance V-PPase expression in pollen.</title>
        <authorList>
            <person name="Mitsuda N."/>
            <person name="Isono T."/>
            <person name="Sato M.H."/>
        </authorList>
    </citation>
    <scope>TISSUE SPECIFICITY</scope>
</reference>
<reference key="8">
    <citation type="journal article" date="2000" name="Biochem. Biophys. Res. Commun.">
        <title>A calmodulin binding protein from Arabidopsis is induced by ethylene and contains a DNA-binding motif.</title>
        <authorList>
            <person name="Reddy A.S.N."/>
            <person name="Reddy V.S."/>
            <person name="Golovkin M."/>
        </authorList>
    </citation>
    <scope>IDENTIFICATION</scope>
</reference>
<reference key="9">
    <citation type="journal article" date="2002" name="J. Biol. Chem.">
        <title>Genes encoding calmodulin-binding proteins in the Arabidopsis genome.</title>
        <authorList>
            <person name="Reddy V.S."/>
            <person name="Ali G.S."/>
            <person name="Reddy A.S.N."/>
        </authorList>
    </citation>
    <scope>IDENTIFICATION</scope>
</reference>
<organism>
    <name type="scientific">Arabidopsis thaliana</name>
    <name type="common">Mouse-ear cress</name>
    <dbReference type="NCBI Taxonomy" id="3702"/>
    <lineage>
        <taxon>Eukaryota</taxon>
        <taxon>Viridiplantae</taxon>
        <taxon>Streptophyta</taxon>
        <taxon>Embryophyta</taxon>
        <taxon>Tracheophyta</taxon>
        <taxon>Spermatophyta</taxon>
        <taxon>Magnoliopsida</taxon>
        <taxon>eudicotyledons</taxon>
        <taxon>Gunneridae</taxon>
        <taxon>Pentapetalae</taxon>
        <taxon>rosids</taxon>
        <taxon>malvids</taxon>
        <taxon>Brassicales</taxon>
        <taxon>Brassicaceae</taxon>
        <taxon>Camelineae</taxon>
        <taxon>Arabidopsis</taxon>
    </lineage>
</organism>
<protein>
    <recommendedName>
        <fullName evidence="8">Calmodulin-binding transcription activator 6</fullName>
        <shortName evidence="8">AtCAMTA6</shortName>
    </recommendedName>
    <alternativeName>
        <fullName evidence="14">Ethylene-induced calmodulin-binding protein 5</fullName>
        <shortName evidence="14">EICBP5</shortName>
    </alternativeName>
    <alternativeName>
        <fullName evidence="7">Ethylene-induced calmodulin-binding protein e</fullName>
        <shortName evidence="7">EICBP.e</shortName>
    </alternativeName>
    <alternativeName>
        <fullName evidence="9">Signal-responsive protein 3</fullName>
        <shortName evidence="9">AtSR3</shortName>
    </alternativeName>
</protein>
<feature type="chain" id="PRO_0000114491" description="Calmodulin-binding transcription activator 6">
    <location>
        <begin position="1"/>
        <end position="838"/>
    </location>
</feature>
<feature type="repeat" description="ANK">
    <location>
        <begin position="525"/>
        <end position="554"/>
    </location>
</feature>
<feature type="domain" description="IQ 1" evidence="3">
    <location>
        <begin position="671"/>
        <end position="700"/>
    </location>
</feature>
<feature type="domain" description="IQ 2" evidence="3">
    <location>
        <begin position="713"/>
        <end position="742"/>
    </location>
</feature>
<feature type="domain" description="IQ 3" evidence="3">
    <location>
        <begin position="788"/>
        <end position="817"/>
    </location>
</feature>
<feature type="DNA-binding region" description="CG-1" evidence="4">
    <location>
        <begin position="25"/>
        <end position="134"/>
    </location>
</feature>
<feature type="region of interest" description="Calmodulin-binding" evidence="5">
    <location>
        <begin position="738"/>
        <end position="760"/>
    </location>
</feature>
<feature type="coiled-coil region" evidence="2">
    <location>
        <begin position="802"/>
        <end position="822"/>
    </location>
</feature>
<feature type="splice variant" id="VSP_042264" description="In isoform 3." evidence="11">
    <original>C</original>
    <variation>YNPKYFTINVKPVNLPNS</variation>
    <location>
        <position position="47"/>
    </location>
</feature>
<feature type="splice variant" id="VSP_017016" description="In isoform 2 and isoform 3." evidence="10">
    <original>VNHLTFLNLSFGKKNSNRR</original>
    <variation>LEYGCLEDI</variation>
    <location>
        <begin position="820"/>
        <end position="838"/>
    </location>
</feature>
<sequence length="838" mass="95382">MDGDGLGRLIGSEIHGFHTLQDLDVQTMLEEAKSRWLRPNEIHAILCGRIILFDRKMLRNFRKDGHNWKKKKDGRTVKEAHEHLKVGNEERIHVYYAHGEDNTTFVRRCYWLLDKARENIVLVHYRDTQEAATTSGDSISSPISVSEQTFPNRVAAEDIDTVVRNHDISLHDINTLDWDELLVPTDLNNQSAPTVDNLSYFTEPLQNAANGTAEHGNATVADGSLDALLNDGPQSRESFGRWMNSFISESNGSLEDPSFEPMVMPRQDPLAPQAVFHSHSNIPEQVFNITDVSPAWAYSSEKTKILVTGFLHDSYQHLERSNLYCVCGDFCVPAEYLQAGVYRCIIPPHSPGMVNLYLSADGHKPISQCFRFEHRAVPVLDKTVPEDNQDSKWEEFEFQVRLSHLLFTSSNKLNVLSSKISPHNLRDAKKLASKTNHLLNSWAYLVKSIQGNKVSFDQAKDHLFELSLKNRLKEWLMEKVLEGRNTLDYDSKGLGVIHLCASLGYTWSVQLFSLSGLSLNFRDKQGWTALHWAAYYGREKMVAALLSAGARPNLVTDSTKDNLGGCMAADLAQQNGYDGLAAYLAEKCLVAQFRDMKIAGNITGDLEACKAEMLNQGTLPEDEQSLKDALAAYRTAAEAAARIQGAFREKALKAARSSVIQFANKEEEAKSIIAAMKIQNAFRKYDTRRKIEAAYRIQCRFQTWKIRREYLNMRRQAIRIQAAFRGLQARRQYKKILWSVGVLEKAVLRWRQKRKGFRGLQVAAEEDSPGEAQEDFYKTSQRQAEERLERSVVRVQAMFRSKKAQQDYRRMKLTHEEAQVNHLTFLNLSFGKKNSNRR</sequence>